<feature type="chain" id="PRO_1000061663" description="Coenzyme PQQ synthesis protein B">
    <location>
        <begin position="1"/>
        <end position="299"/>
    </location>
</feature>
<keyword id="KW-0884">PQQ biosynthesis</keyword>
<keyword id="KW-0813">Transport</keyword>
<proteinExistence type="inferred from homology"/>
<protein>
    <recommendedName>
        <fullName evidence="1">Coenzyme PQQ synthesis protein B</fullName>
    </recommendedName>
    <alternativeName>
        <fullName evidence="1">Pyrroloquinoline quinone biosynthesis protein B</fullName>
    </alternativeName>
</protein>
<organism>
    <name type="scientific">Xanthomonas campestris pv. campestris (strain 8004)</name>
    <dbReference type="NCBI Taxonomy" id="314565"/>
    <lineage>
        <taxon>Bacteria</taxon>
        <taxon>Pseudomonadati</taxon>
        <taxon>Pseudomonadota</taxon>
        <taxon>Gammaproteobacteria</taxon>
        <taxon>Lysobacterales</taxon>
        <taxon>Lysobacteraceae</taxon>
        <taxon>Xanthomonas</taxon>
    </lineage>
</organism>
<accession>Q4UXI1</accession>
<reference key="1">
    <citation type="journal article" date="2005" name="Genome Res.">
        <title>Comparative and functional genomic analyses of the pathogenicity of phytopathogen Xanthomonas campestris pv. campestris.</title>
        <authorList>
            <person name="Qian W."/>
            <person name="Jia Y."/>
            <person name="Ren S.-X."/>
            <person name="He Y.-Q."/>
            <person name="Feng J.-X."/>
            <person name="Lu L.-F."/>
            <person name="Sun Q."/>
            <person name="Ying G."/>
            <person name="Tang D.-J."/>
            <person name="Tang H."/>
            <person name="Wu W."/>
            <person name="Hao P."/>
            <person name="Wang L."/>
            <person name="Jiang B.-L."/>
            <person name="Zeng S."/>
            <person name="Gu W.-Y."/>
            <person name="Lu G."/>
            <person name="Rong L."/>
            <person name="Tian Y."/>
            <person name="Yao Z."/>
            <person name="Fu G."/>
            <person name="Chen B."/>
            <person name="Fang R."/>
            <person name="Qiang B."/>
            <person name="Chen Z."/>
            <person name="Zhao G.-P."/>
            <person name="Tang J.-L."/>
            <person name="He C."/>
        </authorList>
    </citation>
    <scope>NUCLEOTIDE SEQUENCE [LARGE SCALE GENOMIC DNA]</scope>
    <source>
        <strain>8004</strain>
    </source>
</reference>
<evidence type="ECO:0000255" key="1">
    <source>
        <dbReference type="HAMAP-Rule" id="MF_00653"/>
    </source>
</evidence>
<gene>
    <name evidence="1" type="primary">pqqB</name>
    <name type="ordered locus">XC_1172</name>
</gene>
<sequence>MRIIVLGSAAGGGHPQWNCHTPASQRAWQQADGAQRRTQASIAVSADGQRWVLINASPDFRQQILATPALWPQHGLRHSPIESVLLTSGEIDHIAGLLSMRESQRFSLHASSRVLDLLAQNPIFDALNPQYVDRHPFALNTPLTLCDLQLTPFSVPGKVPLFMESRSGGDLAGSNEETLGLTIDDGRHRVHYIPGCAAMTDDLRARLHGAELVFFDGTLWRDDEMVQLGVSQKTGQRMGHMSIDGTDGTLAAFAQLQVARKVLIHINTTNPVLDAHSPEHAAVRAAGWDVAHDGLEISL</sequence>
<name>PQQB_XANC8</name>
<dbReference type="EMBL" id="CP000050">
    <property type="protein sequence ID" value="AAY48242.1"/>
    <property type="molecule type" value="Genomic_DNA"/>
</dbReference>
<dbReference type="RefSeq" id="WP_011038060.1">
    <property type="nucleotide sequence ID" value="NZ_CP155948.1"/>
</dbReference>
<dbReference type="SMR" id="Q4UXI1"/>
<dbReference type="KEGG" id="xcb:XC_1172"/>
<dbReference type="HOGENOM" id="CLU_061120_0_0_6"/>
<dbReference type="UniPathway" id="UPA00539"/>
<dbReference type="Proteomes" id="UP000000420">
    <property type="component" value="Chromosome"/>
</dbReference>
<dbReference type="GO" id="GO:0018189">
    <property type="term" value="P:pyrroloquinoline quinone biosynthetic process"/>
    <property type="evidence" value="ECO:0007669"/>
    <property type="project" value="UniProtKB-UniRule"/>
</dbReference>
<dbReference type="CDD" id="cd16274">
    <property type="entry name" value="PQQB-like_MBL-fold"/>
    <property type="match status" value="1"/>
</dbReference>
<dbReference type="Gene3D" id="3.60.15.10">
    <property type="entry name" value="Ribonuclease Z/Hydroxyacylglutathione hydrolase-like"/>
    <property type="match status" value="1"/>
</dbReference>
<dbReference type="HAMAP" id="MF_00653">
    <property type="entry name" value="PQQ_syn_PqqB"/>
    <property type="match status" value="1"/>
</dbReference>
<dbReference type="InterPro" id="IPR001279">
    <property type="entry name" value="Metallo-B-lactamas"/>
</dbReference>
<dbReference type="InterPro" id="IPR011842">
    <property type="entry name" value="PQQ_synth_PqqB"/>
</dbReference>
<dbReference type="InterPro" id="IPR036866">
    <property type="entry name" value="RibonucZ/Hydroxyglut_hydro"/>
</dbReference>
<dbReference type="NCBIfam" id="TIGR02108">
    <property type="entry name" value="PQQ_syn_pqqB"/>
    <property type="match status" value="1"/>
</dbReference>
<dbReference type="PANTHER" id="PTHR42663:SF7">
    <property type="entry name" value="COENZYME PQQ SYNTHESIS PROTEIN B"/>
    <property type="match status" value="1"/>
</dbReference>
<dbReference type="PANTHER" id="PTHR42663">
    <property type="entry name" value="HYDROLASE C777.06C-RELATED-RELATED"/>
    <property type="match status" value="1"/>
</dbReference>
<dbReference type="Pfam" id="PF12706">
    <property type="entry name" value="Lactamase_B_2"/>
    <property type="match status" value="1"/>
</dbReference>
<dbReference type="SUPFAM" id="SSF56281">
    <property type="entry name" value="Metallo-hydrolase/oxidoreductase"/>
    <property type="match status" value="1"/>
</dbReference>
<comment type="function">
    <text evidence="1">May be involved in the transport of PQQ or its precursor to the periplasm.</text>
</comment>
<comment type="pathway">
    <text evidence="1">Cofactor biosynthesis; pyrroloquinoline quinone biosynthesis.</text>
</comment>
<comment type="similarity">
    <text evidence="1">Belongs to the PqqB family.</text>
</comment>